<evidence type="ECO:0000255" key="1">
    <source>
        <dbReference type="PROSITE-ProRule" id="PRU00219"/>
    </source>
</evidence>
<organism>
    <name type="scientific">Methanocaldococcus jannaschii (strain ATCC 43067 / DSM 2661 / JAL-1 / JCM 10045 / NBRC 100440)</name>
    <name type="common">Methanococcus jannaschii</name>
    <dbReference type="NCBI Taxonomy" id="243232"/>
    <lineage>
        <taxon>Archaea</taxon>
        <taxon>Methanobacteriati</taxon>
        <taxon>Methanobacteriota</taxon>
        <taxon>Methanomada group</taxon>
        <taxon>Methanococci</taxon>
        <taxon>Methanococcales</taxon>
        <taxon>Methanocaldococcaceae</taxon>
        <taxon>Methanocaldococcus</taxon>
    </lineage>
</organism>
<feature type="chain" id="PRO_0000107059" description="Uncharacterized protein MJ0811">
    <location>
        <begin position="1"/>
        <end position="439"/>
    </location>
</feature>
<feature type="domain" description="VWFA" evidence="1">
    <location>
        <begin position="273"/>
        <end position="439"/>
    </location>
</feature>
<reference key="1">
    <citation type="journal article" date="1996" name="Science">
        <title>Complete genome sequence of the methanogenic archaeon, Methanococcus jannaschii.</title>
        <authorList>
            <person name="Bult C.J."/>
            <person name="White O."/>
            <person name="Olsen G.J."/>
            <person name="Zhou L."/>
            <person name="Fleischmann R.D."/>
            <person name="Sutton G.G."/>
            <person name="Blake J.A."/>
            <person name="FitzGerald L.M."/>
            <person name="Clayton R.A."/>
            <person name="Gocayne J.D."/>
            <person name="Kerlavage A.R."/>
            <person name="Dougherty B.A."/>
            <person name="Tomb J.-F."/>
            <person name="Adams M.D."/>
            <person name="Reich C.I."/>
            <person name="Overbeek R."/>
            <person name="Kirkness E.F."/>
            <person name="Weinstock K.G."/>
            <person name="Merrick J.M."/>
            <person name="Glodek A."/>
            <person name="Scott J.L."/>
            <person name="Geoghagen N.S.M."/>
            <person name="Weidman J.F."/>
            <person name="Fuhrmann J.L."/>
            <person name="Nguyen D."/>
            <person name="Utterback T.R."/>
            <person name="Kelley J.M."/>
            <person name="Peterson J.D."/>
            <person name="Sadow P.W."/>
            <person name="Hanna M.C."/>
            <person name="Cotton M.D."/>
            <person name="Roberts K.M."/>
            <person name="Hurst M.A."/>
            <person name="Kaine B.P."/>
            <person name="Borodovsky M."/>
            <person name="Klenk H.-P."/>
            <person name="Fraser C.M."/>
            <person name="Smith H.O."/>
            <person name="Woese C.R."/>
            <person name="Venter J.C."/>
        </authorList>
    </citation>
    <scope>NUCLEOTIDE SEQUENCE [LARGE SCALE GENOMIC DNA]</scope>
    <source>
        <strain>ATCC 43067 / DSM 2661 / JAL-1 / JCM 10045 / NBRC 100440</strain>
    </source>
</reference>
<dbReference type="EMBL" id="L77117">
    <property type="protein sequence ID" value="AAB98810.1"/>
    <property type="molecule type" value="Genomic_DNA"/>
</dbReference>
<dbReference type="PIR" id="C64401">
    <property type="entry name" value="C64401"/>
</dbReference>
<dbReference type="RefSeq" id="WP_010870322.1">
    <property type="nucleotide sequence ID" value="NC_000909.1"/>
</dbReference>
<dbReference type="SMR" id="Q58221"/>
<dbReference type="STRING" id="243232.MJ_0811"/>
<dbReference type="PaxDb" id="243232-MJ_0811"/>
<dbReference type="EnsemblBacteria" id="AAB98810">
    <property type="protein sequence ID" value="AAB98810"/>
    <property type="gene ID" value="MJ_0811"/>
</dbReference>
<dbReference type="GeneID" id="1451694"/>
<dbReference type="KEGG" id="mja:MJ_0811"/>
<dbReference type="eggNOG" id="arCOG00442">
    <property type="taxonomic scope" value="Archaea"/>
</dbReference>
<dbReference type="HOGENOM" id="CLU_036888_0_0_2"/>
<dbReference type="InParanoid" id="Q58221"/>
<dbReference type="OrthoDB" id="64524at2157"/>
<dbReference type="PhylomeDB" id="Q58221"/>
<dbReference type="Proteomes" id="UP000000805">
    <property type="component" value="Chromosome"/>
</dbReference>
<dbReference type="GO" id="GO:0005829">
    <property type="term" value="C:cytosol"/>
    <property type="evidence" value="ECO:0000318"/>
    <property type="project" value="GO_Central"/>
</dbReference>
<dbReference type="CDD" id="cd01462">
    <property type="entry name" value="VWA_YIEM_type"/>
    <property type="match status" value="1"/>
</dbReference>
<dbReference type="Gene3D" id="3.40.50.410">
    <property type="entry name" value="von Willebrand factor, type A domain"/>
    <property type="match status" value="1"/>
</dbReference>
<dbReference type="InterPro" id="IPR002035">
    <property type="entry name" value="VWF_A"/>
</dbReference>
<dbReference type="InterPro" id="IPR036465">
    <property type="entry name" value="vWFA_dom_sf"/>
</dbReference>
<dbReference type="PANTHER" id="PTHR36846">
    <property type="entry name" value="PROTEIN VIAA"/>
    <property type="match status" value="1"/>
</dbReference>
<dbReference type="PANTHER" id="PTHR36846:SF1">
    <property type="entry name" value="PROTEIN VIAA"/>
    <property type="match status" value="1"/>
</dbReference>
<dbReference type="Pfam" id="PF13519">
    <property type="entry name" value="VWA_2"/>
    <property type="match status" value="1"/>
</dbReference>
<dbReference type="SMART" id="SM00327">
    <property type="entry name" value="VWA"/>
    <property type="match status" value="1"/>
</dbReference>
<dbReference type="SUPFAM" id="SSF53300">
    <property type="entry name" value="vWA-like"/>
    <property type="match status" value="1"/>
</dbReference>
<dbReference type="PROSITE" id="PS50234">
    <property type="entry name" value="VWFA"/>
    <property type="match status" value="1"/>
</dbReference>
<gene>
    <name type="ordered locus">MJ0811</name>
</gene>
<proteinExistence type="predicted"/>
<accession>Q58221</accession>
<sequence length="439" mass="51119">MKNIIKHDAYDKKAYERFLKNSKYLQKLISYYSQYHPIHEKLAEDTFYAFFKYVVEFNEYVEEKFKINKAILEGAIKNIEYEKSKLLTELDEVNAGTATIMFCEKFFENLKLAKLNKELKKFASEGKGEGLEDKLKEIAKNTMKDIAEEVSEVIQGFNAVENFGKGEGDKKLLSPEDRIKLADKILQNKKIREIVKKLGKLRLLAINEYKSKIKHYSGEIYSTKIGRDLKHLLPKEIVNLSDEILYYDFLRRFVDKKLLIYDIQNKLEKQKGPIIILLDHSGSMYGDREIWGKAVALSIIEIAKRENRDIYYIAFDDGVRFEKKINPKTITFDEIIEIASLYFGGGTNFIMPLNRAMSIIKEHETFKNADILLITDGYAEVNDVFLKEFDKFKNEYNAKLISVFVETFPTETLKAISDEVIKVYDLADEEARKIYKSIS</sequence>
<name>Y811_METJA</name>
<keyword id="KW-1185">Reference proteome</keyword>
<protein>
    <recommendedName>
        <fullName>Uncharacterized protein MJ0811</fullName>
    </recommendedName>
</protein>